<comment type="function">
    <text evidence="1">Catalyzes the transfer of a ribosyl phosphate group from 5-phosphoribose 1-diphosphate to orotate, leading to the formation of orotidine monophosphate (OMP).</text>
</comment>
<comment type="catalytic activity">
    <reaction evidence="1">
        <text>orotidine 5'-phosphate + diphosphate = orotate + 5-phospho-alpha-D-ribose 1-diphosphate</text>
        <dbReference type="Rhea" id="RHEA:10380"/>
        <dbReference type="ChEBI" id="CHEBI:30839"/>
        <dbReference type="ChEBI" id="CHEBI:33019"/>
        <dbReference type="ChEBI" id="CHEBI:57538"/>
        <dbReference type="ChEBI" id="CHEBI:58017"/>
        <dbReference type="EC" id="2.4.2.10"/>
    </reaction>
</comment>
<comment type="cofactor">
    <cofactor evidence="1">
        <name>Mg(2+)</name>
        <dbReference type="ChEBI" id="CHEBI:18420"/>
    </cofactor>
</comment>
<comment type="pathway">
    <text evidence="1">Pyrimidine metabolism; UMP biosynthesis via de novo pathway; UMP from orotate: step 1/2.</text>
</comment>
<comment type="subunit">
    <text evidence="1">Homodimer.</text>
</comment>
<comment type="similarity">
    <text evidence="1">Belongs to the purine/pyrimidine phosphoribosyltransferase family. PyrE subfamily.</text>
</comment>
<comment type="sequence caution" evidence="2">
    <conflict type="erroneous initiation">
        <sequence resource="EMBL-CDS" id="CAE39343"/>
    </conflict>
</comment>
<reference key="1">
    <citation type="journal article" date="2003" name="Nat. Genet.">
        <title>Comparative analysis of the genome sequences of Bordetella pertussis, Bordetella parapertussis and Bordetella bronchiseptica.</title>
        <authorList>
            <person name="Parkhill J."/>
            <person name="Sebaihia M."/>
            <person name="Preston A."/>
            <person name="Murphy L.D."/>
            <person name="Thomson N.R."/>
            <person name="Harris D.E."/>
            <person name="Holden M.T.G."/>
            <person name="Churcher C.M."/>
            <person name="Bentley S.D."/>
            <person name="Mungall K.L."/>
            <person name="Cerdeno-Tarraga A.-M."/>
            <person name="Temple L."/>
            <person name="James K.D."/>
            <person name="Harris B."/>
            <person name="Quail M.A."/>
            <person name="Achtman M."/>
            <person name="Atkin R."/>
            <person name="Baker S."/>
            <person name="Basham D."/>
            <person name="Bason N."/>
            <person name="Cherevach I."/>
            <person name="Chillingworth T."/>
            <person name="Collins M."/>
            <person name="Cronin A."/>
            <person name="Davis P."/>
            <person name="Doggett J."/>
            <person name="Feltwell T."/>
            <person name="Goble A."/>
            <person name="Hamlin N."/>
            <person name="Hauser H."/>
            <person name="Holroyd S."/>
            <person name="Jagels K."/>
            <person name="Leather S."/>
            <person name="Moule S."/>
            <person name="Norberczak H."/>
            <person name="O'Neil S."/>
            <person name="Ormond D."/>
            <person name="Price C."/>
            <person name="Rabbinowitsch E."/>
            <person name="Rutter S."/>
            <person name="Sanders M."/>
            <person name="Saunders D."/>
            <person name="Seeger K."/>
            <person name="Sharp S."/>
            <person name="Simmonds M."/>
            <person name="Skelton J."/>
            <person name="Squares R."/>
            <person name="Squares S."/>
            <person name="Stevens K."/>
            <person name="Unwin L."/>
            <person name="Whitehead S."/>
            <person name="Barrell B.G."/>
            <person name="Maskell D.J."/>
        </authorList>
    </citation>
    <scope>NUCLEOTIDE SEQUENCE [LARGE SCALE GENOMIC DNA]</scope>
    <source>
        <strain>12822 / ATCC BAA-587 / NCTC 13253</strain>
    </source>
</reference>
<organism>
    <name type="scientific">Bordetella parapertussis (strain 12822 / ATCC BAA-587 / NCTC 13253)</name>
    <dbReference type="NCBI Taxonomy" id="257311"/>
    <lineage>
        <taxon>Bacteria</taxon>
        <taxon>Pseudomonadati</taxon>
        <taxon>Pseudomonadota</taxon>
        <taxon>Betaproteobacteria</taxon>
        <taxon>Burkholderiales</taxon>
        <taxon>Alcaligenaceae</taxon>
        <taxon>Bordetella</taxon>
    </lineage>
</organism>
<accession>Q7W3H5</accession>
<evidence type="ECO:0000255" key="1">
    <source>
        <dbReference type="HAMAP-Rule" id="MF_01208"/>
    </source>
</evidence>
<evidence type="ECO:0000305" key="2"/>
<keyword id="KW-0328">Glycosyltransferase</keyword>
<keyword id="KW-0460">Magnesium</keyword>
<keyword id="KW-0665">Pyrimidine biosynthesis</keyword>
<keyword id="KW-0808">Transferase</keyword>
<protein>
    <recommendedName>
        <fullName evidence="1">Orotate phosphoribosyltransferase</fullName>
        <shortName evidence="1">OPRT</shortName>
        <shortName evidence="1">OPRTase</shortName>
        <ecNumber evidence="1">2.4.2.10</ecNumber>
    </recommendedName>
</protein>
<sequence length="224" mass="23284">MSASASTAADFVRFALDEGVLRFGSFKVKSGRISPYFFNAGLFNSGRSVGALAGFYAQALVDSGVAFDMLFGPAYKGIPLATATSVALAGHAAMAGRDVPFAFNRKEAKDHGEGGTLVGAPLTGKVVIIDDVITAGTSVRESVEIIRAAGAEPAAVLIALDRMERAGPDDALSPHSAVQDVARTYGIPVVSIASLADIMTLLQDDAQFAEHRAAVQAYRSKYGV</sequence>
<dbReference type="EC" id="2.4.2.10" evidence="1"/>
<dbReference type="EMBL" id="BX640435">
    <property type="protein sequence ID" value="CAE39343.1"/>
    <property type="status" value="ALT_INIT"/>
    <property type="molecule type" value="Genomic_DNA"/>
</dbReference>
<dbReference type="RefSeq" id="WP_041937307.1">
    <property type="nucleotide sequence ID" value="NC_002928.3"/>
</dbReference>
<dbReference type="SMR" id="Q7W3H5"/>
<dbReference type="GeneID" id="93205859"/>
<dbReference type="KEGG" id="bpa:BPP4060"/>
<dbReference type="HOGENOM" id="CLU_074878_0_1_4"/>
<dbReference type="UniPathway" id="UPA00070">
    <property type="reaction ID" value="UER00119"/>
</dbReference>
<dbReference type="Proteomes" id="UP000001421">
    <property type="component" value="Chromosome"/>
</dbReference>
<dbReference type="GO" id="GO:0005737">
    <property type="term" value="C:cytoplasm"/>
    <property type="evidence" value="ECO:0007669"/>
    <property type="project" value="TreeGrafter"/>
</dbReference>
<dbReference type="GO" id="GO:0000287">
    <property type="term" value="F:magnesium ion binding"/>
    <property type="evidence" value="ECO:0007669"/>
    <property type="project" value="UniProtKB-UniRule"/>
</dbReference>
<dbReference type="GO" id="GO:0004588">
    <property type="term" value="F:orotate phosphoribosyltransferase activity"/>
    <property type="evidence" value="ECO:0007669"/>
    <property type="project" value="UniProtKB-UniRule"/>
</dbReference>
<dbReference type="GO" id="GO:0006207">
    <property type="term" value="P:'de novo' pyrimidine nucleobase biosynthetic process"/>
    <property type="evidence" value="ECO:0007669"/>
    <property type="project" value="TreeGrafter"/>
</dbReference>
<dbReference type="GO" id="GO:0044205">
    <property type="term" value="P:'de novo' UMP biosynthetic process"/>
    <property type="evidence" value="ECO:0007669"/>
    <property type="project" value="UniProtKB-UniRule"/>
</dbReference>
<dbReference type="GO" id="GO:0046132">
    <property type="term" value="P:pyrimidine ribonucleoside biosynthetic process"/>
    <property type="evidence" value="ECO:0007669"/>
    <property type="project" value="TreeGrafter"/>
</dbReference>
<dbReference type="CDD" id="cd06223">
    <property type="entry name" value="PRTases_typeI"/>
    <property type="match status" value="1"/>
</dbReference>
<dbReference type="FunFam" id="3.40.50.2020:FF:000008">
    <property type="entry name" value="Orotate phosphoribosyltransferase"/>
    <property type="match status" value="1"/>
</dbReference>
<dbReference type="Gene3D" id="3.40.50.2020">
    <property type="match status" value="1"/>
</dbReference>
<dbReference type="HAMAP" id="MF_01208">
    <property type="entry name" value="PyrE"/>
    <property type="match status" value="1"/>
</dbReference>
<dbReference type="InterPro" id="IPR023031">
    <property type="entry name" value="OPRT"/>
</dbReference>
<dbReference type="InterPro" id="IPR004467">
    <property type="entry name" value="Or_phspho_trans_dom"/>
</dbReference>
<dbReference type="InterPro" id="IPR000836">
    <property type="entry name" value="PRibTrfase_dom"/>
</dbReference>
<dbReference type="InterPro" id="IPR029057">
    <property type="entry name" value="PRTase-like"/>
</dbReference>
<dbReference type="NCBIfam" id="TIGR00336">
    <property type="entry name" value="pyrE"/>
    <property type="match status" value="1"/>
</dbReference>
<dbReference type="PANTHER" id="PTHR46683">
    <property type="entry name" value="OROTATE PHOSPHORIBOSYLTRANSFERASE 1-RELATED"/>
    <property type="match status" value="1"/>
</dbReference>
<dbReference type="PANTHER" id="PTHR46683:SF1">
    <property type="entry name" value="OROTATE PHOSPHORIBOSYLTRANSFERASE 1-RELATED"/>
    <property type="match status" value="1"/>
</dbReference>
<dbReference type="Pfam" id="PF00156">
    <property type="entry name" value="Pribosyltran"/>
    <property type="match status" value="1"/>
</dbReference>
<dbReference type="SUPFAM" id="SSF53271">
    <property type="entry name" value="PRTase-like"/>
    <property type="match status" value="1"/>
</dbReference>
<dbReference type="PROSITE" id="PS00103">
    <property type="entry name" value="PUR_PYR_PR_TRANSFER"/>
    <property type="match status" value="1"/>
</dbReference>
<proteinExistence type="inferred from homology"/>
<gene>
    <name evidence="1" type="primary">pyrE</name>
    <name type="ordered locus">BPP4060</name>
</gene>
<feature type="chain" id="PRO_0000110676" description="Orotate phosphoribosyltransferase">
    <location>
        <begin position="1"/>
        <end position="224"/>
    </location>
</feature>
<feature type="binding site" description="in other chain" evidence="1">
    <location>
        <position position="29"/>
    </location>
    <ligand>
        <name>5-phospho-alpha-D-ribose 1-diphosphate</name>
        <dbReference type="ChEBI" id="CHEBI:58017"/>
        <note>ligand shared between dimeric partners</note>
    </ligand>
</feature>
<feature type="binding site" evidence="1">
    <location>
        <begin position="37"/>
        <end position="38"/>
    </location>
    <ligand>
        <name>orotate</name>
        <dbReference type="ChEBI" id="CHEBI:30839"/>
    </ligand>
</feature>
<feature type="binding site" description="in other chain" evidence="1">
    <location>
        <begin position="75"/>
        <end position="76"/>
    </location>
    <ligand>
        <name>5-phospho-alpha-D-ribose 1-diphosphate</name>
        <dbReference type="ChEBI" id="CHEBI:58017"/>
        <note>ligand shared between dimeric partners</note>
    </ligand>
</feature>
<feature type="binding site" evidence="1">
    <location>
        <position position="105"/>
    </location>
    <ligand>
        <name>5-phospho-alpha-D-ribose 1-diphosphate</name>
        <dbReference type="ChEBI" id="CHEBI:58017"/>
        <note>ligand shared between dimeric partners</note>
    </ligand>
</feature>
<feature type="binding site" description="in other chain" evidence="1">
    <location>
        <position position="106"/>
    </location>
    <ligand>
        <name>5-phospho-alpha-D-ribose 1-diphosphate</name>
        <dbReference type="ChEBI" id="CHEBI:58017"/>
        <note>ligand shared between dimeric partners</note>
    </ligand>
</feature>
<feature type="binding site" evidence="1">
    <location>
        <position position="109"/>
    </location>
    <ligand>
        <name>5-phospho-alpha-D-ribose 1-diphosphate</name>
        <dbReference type="ChEBI" id="CHEBI:58017"/>
        <note>ligand shared between dimeric partners</note>
    </ligand>
</feature>
<feature type="binding site" evidence="1">
    <location>
        <position position="111"/>
    </location>
    <ligand>
        <name>5-phospho-alpha-D-ribose 1-diphosphate</name>
        <dbReference type="ChEBI" id="CHEBI:58017"/>
        <note>ligand shared between dimeric partners</note>
    </ligand>
</feature>
<feature type="binding site" description="in other chain" evidence="1">
    <location>
        <begin position="130"/>
        <end position="138"/>
    </location>
    <ligand>
        <name>5-phospho-alpha-D-ribose 1-diphosphate</name>
        <dbReference type="ChEBI" id="CHEBI:58017"/>
        <note>ligand shared between dimeric partners</note>
    </ligand>
</feature>
<feature type="binding site" evidence="1">
    <location>
        <position position="134"/>
    </location>
    <ligand>
        <name>orotate</name>
        <dbReference type="ChEBI" id="CHEBI:30839"/>
    </ligand>
</feature>
<feature type="binding site" evidence="1">
    <location>
        <position position="162"/>
    </location>
    <ligand>
        <name>orotate</name>
        <dbReference type="ChEBI" id="CHEBI:30839"/>
    </ligand>
</feature>
<name>PYRE_BORPA</name>